<feature type="chain" id="PRO_0000086923" description="Protein ECM7">
    <location>
        <begin position="1"/>
        <end position="448"/>
    </location>
</feature>
<feature type="topological domain" description="Cytoplasmic" evidence="1">
    <location>
        <begin position="1"/>
        <end position="28"/>
    </location>
</feature>
<feature type="transmembrane region" description="Helical" evidence="1">
    <location>
        <begin position="29"/>
        <end position="49"/>
    </location>
</feature>
<feature type="topological domain" description="Extracellular" evidence="1">
    <location>
        <begin position="50"/>
        <end position="204"/>
    </location>
</feature>
<feature type="transmembrane region" description="Helical" evidence="1">
    <location>
        <begin position="205"/>
        <end position="225"/>
    </location>
</feature>
<feature type="topological domain" description="Cytoplasmic" evidence="1">
    <location>
        <begin position="226"/>
        <end position="246"/>
    </location>
</feature>
<feature type="transmembrane region" description="Helical" evidence="1">
    <location>
        <begin position="247"/>
        <end position="267"/>
    </location>
</feature>
<feature type="topological domain" description="Extracellular" evidence="1">
    <location>
        <begin position="268"/>
        <end position="287"/>
    </location>
</feature>
<feature type="transmembrane region" description="Helical" evidence="1">
    <location>
        <begin position="288"/>
        <end position="308"/>
    </location>
</feature>
<feature type="topological domain" description="Cytoplasmic" evidence="1">
    <location>
        <begin position="309"/>
        <end position="448"/>
    </location>
</feature>
<feature type="region of interest" description="Disordered" evidence="2">
    <location>
        <begin position="351"/>
        <end position="411"/>
    </location>
</feature>
<feature type="region of interest" description="Disordered" evidence="2">
    <location>
        <begin position="427"/>
        <end position="448"/>
    </location>
</feature>
<feature type="compositionally biased region" description="Polar residues" evidence="2">
    <location>
        <begin position="351"/>
        <end position="363"/>
    </location>
</feature>
<feature type="compositionally biased region" description="Polar residues" evidence="2">
    <location>
        <begin position="383"/>
        <end position="406"/>
    </location>
</feature>
<proteinExistence type="evidence at protein level"/>
<name>ECM7_YEAST</name>
<organism>
    <name type="scientific">Saccharomyces cerevisiae (strain ATCC 204508 / S288c)</name>
    <name type="common">Baker's yeast</name>
    <dbReference type="NCBI Taxonomy" id="559292"/>
    <lineage>
        <taxon>Eukaryota</taxon>
        <taxon>Fungi</taxon>
        <taxon>Dikarya</taxon>
        <taxon>Ascomycota</taxon>
        <taxon>Saccharomycotina</taxon>
        <taxon>Saccharomycetes</taxon>
        <taxon>Saccharomycetales</taxon>
        <taxon>Saccharomycetaceae</taxon>
        <taxon>Saccharomyces</taxon>
    </lineage>
</organism>
<evidence type="ECO:0000255" key="1"/>
<evidence type="ECO:0000256" key="2">
    <source>
        <dbReference type="SAM" id="MobiDB-lite"/>
    </source>
</evidence>
<keyword id="KW-0961">Cell wall biogenesis/degradation</keyword>
<keyword id="KW-0472">Membrane</keyword>
<keyword id="KW-1185">Reference proteome</keyword>
<keyword id="KW-0812">Transmembrane</keyword>
<keyword id="KW-1133">Transmembrane helix</keyword>
<keyword id="KW-0862">Zinc</keyword>
<gene>
    <name type="primary">ECM7</name>
    <name type="synonym">ZRG15</name>
    <name type="ordered locus">YLR443W</name>
</gene>
<dbReference type="EMBL" id="U22382">
    <property type="protein sequence ID" value="AAB67532.1"/>
    <property type="molecule type" value="Genomic_DNA"/>
</dbReference>
<dbReference type="EMBL" id="AY899247">
    <property type="protein sequence ID" value="AAX83932.1"/>
    <property type="molecule type" value="mRNA"/>
</dbReference>
<dbReference type="EMBL" id="BK006945">
    <property type="protein sequence ID" value="DAA09744.1"/>
    <property type="molecule type" value="Genomic_DNA"/>
</dbReference>
<dbReference type="PIR" id="S55966">
    <property type="entry name" value="S55966"/>
</dbReference>
<dbReference type="RefSeq" id="NP_013548.1">
    <property type="nucleotide sequence ID" value="NM_001182331.1"/>
</dbReference>
<dbReference type="BioGRID" id="31702">
    <property type="interactions" value="100"/>
</dbReference>
<dbReference type="DIP" id="DIP-5013N"/>
<dbReference type="FunCoup" id="Q06200">
    <property type="interactions" value="25"/>
</dbReference>
<dbReference type="IntAct" id="Q06200">
    <property type="interactions" value="1"/>
</dbReference>
<dbReference type="STRING" id="4932.YLR443W"/>
<dbReference type="TCDB" id="1.H.1.4.6">
    <property type="family name" value="the claudin tight junction (claudin1) family"/>
</dbReference>
<dbReference type="iPTMnet" id="Q06200"/>
<dbReference type="PaxDb" id="4932-YLR443W"/>
<dbReference type="PeptideAtlas" id="Q06200"/>
<dbReference type="EnsemblFungi" id="YLR443W_mRNA">
    <property type="protein sequence ID" value="YLR443W"/>
    <property type="gene ID" value="YLR443W"/>
</dbReference>
<dbReference type="GeneID" id="851164"/>
<dbReference type="KEGG" id="sce:YLR443W"/>
<dbReference type="AGR" id="SGD:S000004435"/>
<dbReference type="SGD" id="S000004435">
    <property type="gene designation" value="ECM7"/>
</dbReference>
<dbReference type="VEuPathDB" id="FungiDB:YLR443W"/>
<dbReference type="eggNOG" id="ENOG502R7IE">
    <property type="taxonomic scope" value="Eukaryota"/>
</dbReference>
<dbReference type="HOGENOM" id="CLU_042615_0_0_1"/>
<dbReference type="InParanoid" id="Q06200"/>
<dbReference type="OMA" id="WSGLEWC"/>
<dbReference type="OrthoDB" id="4062523at2759"/>
<dbReference type="BioCyc" id="YEAST:G3O-32499-MONOMER"/>
<dbReference type="BioGRID-ORCS" id="851164">
    <property type="hits" value="1 hit in 10 CRISPR screens"/>
</dbReference>
<dbReference type="PRO" id="PR:Q06200"/>
<dbReference type="Proteomes" id="UP000002311">
    <property type="component" value="Chromosome XII"/>
</dbReference>
<dbReference type="RNAct" id="Q06200">
    <property type="molecule type" value="protein"/>
</dbReference>
<dbReference type="GO" id="GO:0051285">
    <property type="term" value="C:cell cortex of cell tip"/>
    <property type="evidence" value="ECO:0000318"/>
    <property type="project" value="GO_Central"/>
</dbReference>
<dbReference type="GO" id="GO:0000324">
    <property type="term" value="C:fungal-type vacuole"/>
    <property type="evidence" value="ECO:0007005"/>
    <property type="project" value="SGD"/>
</dbReference>
<dbReference type="GO" id="GO:0005886">
    <property type="term" value="C:plasma membrane"/>
    <property type="evidence" value="ECO:0000318"/>
    <property type="project" value="GO_Central"/>
</dbReference>
<dbReference type="GO" id="GO:0006816">
    <property type="term" value="P:calcium ion transport"/>
    <property type="evidence" value="ECO:0000315"/>
    <property type="project" value="SGD"/>
</dbReference>
<dbReference type="GO" id="GO:0031505">
    <property type="term" value="P:fungal-type cell wall organization"/>
    <property type="evidence" value="ECO:0000318"/>
    <property type="project" value="GO_Central"/>
</dbReference>
<dbReference type="InterPro" id="IPR009571">
    <property type="entry name" value="SUR7/Rim9-like_fungi"/>
</dbReference>
<dbReference type="InterPro" id="IPR052413">
    <property type="entry name" value="SUR7_domain"/>
</dbReference>
<dbReference type="PANTHER" id="PTHR28019">
    <property type="entry name" value="CELL MEMBRANE PROTEIN YLR413W-RELATED"/>
    <property type="match status" value="1"/>
</dbReference>
<dbReference type="PANTHER" id="PTHR28019:SF6">
    <property type="entry name" value="PROTEIN ECM7"/>
    <property type="match status" value="1"/>
</dbReference>
<dbReference type="Pfam" id="PF06687">
    <property type="entry name" value="SUR7"/>
    <property type="match status" value="1"/>
</dbReference>
<comment type="function">
    <text>May be involved in cell wall organization and biogenesis.</text>
</comment>
<comment type="subcellular location">
    <subcellularLocation>
        <location>Membrane</location>
        <topology>Multi-pass membrane protein</topology>
    </subcellularLocation>
</comment>
<comment type="induction">
    <text>Repressed by zinc.</text>
</comment>
<sequence length="448" mass="50328">MVMSRIRDTIARPFQNLTALEKVVQWLRLGTTLLIISFGLALTVGPLSSPRTLYMSRLDTYSADITTGLFTVLRESMEQSTSTEENNGVGLTTSELYILTAYTESQIKNVPQYITVSLYGRCDSTYTMVEVFDSEGNMHSVKNSTTKSTCSSIGTDYLFDYREVLESLGLDIILDYAYNKIGSQQAESSAYTTYMRSLKHKKANVLHLLYAVISFQVCMLFFMIWYYYIKGRFMNALKERALVHINSLLSLVVFIGGLISSISLAWVNYTIQSRINTELEAFGFSYHLGVTWFALLWCFAGLISVSCLAWSGLEWCISDNGTSYGGGIDDKFLGYQAGVFTDADLDDETSYSQRYPQRQSTSGEAELMRNSDTMATIRKTSDVDLNSENDANTSLDHGNPTANISNGGKHEPFATREEFELQDIRFRSSNDSEESMQRVIKPSSALQF</sequence>
<reference key="1">
    <citation type="journal article" date="1997" name="Nature">
        <title>The nucleotide sequence of Saccharomyces cerevisiae chromosome XII.</title>
        <authorList>
            <person name="Johnston M."/>
            <person name="Hillier L.W."/>
            <person name="Riles L."/>
            <person name="Albermann K."/>
            <person name="Andre B."/>
            <person name="Ansorge W."/>
            <person name="Benes V."/>
            <person name="Brueckner M."/>
            <person name="Delius H."/>
            <person name="Dubois E."/>
            <person name="Duesterhoeft A."/>
            <person name="Entian K.-D."/>
            <person name="Floeth M."/>
            <person name="Goffeau A."/>
            <person name="Hebling U."/>
            <person name="Heumann K."/>
            <person name="Heuss-Neitzel D."/>
            <person name="Hilbert H."/>
            <person name="Hilger F."/>
            <person name="Kleine K."/>
            <person name="Koetter P."/>
            <person name="Louis E.J."/>
            <person name="Messenguy F."/>
            <person name="Mewes H.-W."/>
            <person name="Miosga T."/>
            <person name="Moestl D."/>
            <person name="Mueller-Auer S."/>
            <person name="Nentwich U."/>
            <person name="Obermaier B."/>
            <person name="Piravandi E."/>
            <person name="Pohl T.M."/>
            <person name="Portetelle D."/>
            <person name="Purnelle B."/>
            <person name="Rechmann S."/>
            <person name="Rieger M."/>
            <person name="Rinke M."/>
            <person name="Rose M."/>
            <person name="Scharfe M."/>
            <person name="Scherens B."/>
            <person name="Scholler P."/>
            <person name="Schwager C."/>
            <person name="Schwarz S."/>
            <person name="Underwood A.P."/>
            <person name="Urrestarazu L.A."/>
            <person name="Vandenbol M."/>
            <person name="Verhasselt P."/>
            <person name="Vierendeels F."/>
            <person name="Voet M."/>
            <person name="Volckaert G."/>
            <person name="Voss H."/>
            <person name="Wambutt R."/>
            <person name="Wedler E."/>
            <person name="Wedler H."/>
            <person name="Zimmermann F.K."/>
            <person name="Zollner A."/>
            <person name="Hani J."/>
            <person name="Hoheisel J.D."/>
        </authorList>
    </citation>
    <scope>NUCLEOTIDE SEQUENCE [LARGE SCALE GENOMIC DNA]</scope>
    <source>
        <strain>ATCC 204508 / S288c</strain>
    </source>
</reference>
<reference key="2">
    <citation type="journal article" date="2014" name="G3 (Bethesda)">
        <title>The reference genome sequence of Saccharomyces cerevisiae: Then and now.</title>
        <authorList>
            <person name="Engel S.R."/>
            <person name="Dietrich F.S."/>
            <person name="Fisk D.G."/>
            <person name="Binkley G."/>
            <person name="Balakrishnan R."/>
            <person name="Costanzo M.C."/>
            <person name="Dwight S.S."/>
            <person name="Hitz B.C."/>
            <person name="Karra K."/>
            <person name="Nash R.S."/>
            <person name="Weng S."/>
            <person name="Wong E.D."/>
            <person name="Lloyd P."/>
            <person name="Skrzypek M.S."/>
            <person name="Miyasato S.R."/>
            <person name="Simison M."/>
            <person name="Cherry J.M."/>
        </authorList>
    </citation>
    <scope>GENOME REANNOTATION</scope>
    <source>
        <strain>ATCC 204508 / S288c</strain>
    </source>
</reference>
<reference key="3">
    <citation type="journal article" date="2005" name="Nucleic Acids Res.">
        <title>Mapping of transcription start sites in Saccharomyces cerevisiae using 5' SAGE.</title>
        <authorList>
            <person name="Zhang Z."/>
            <person name="Dietrich F.S."/>
        </authorList>
    </citation>
    <scope>NUCLEOTIDE SEQUENCE [MRNA] OF 1-95</scope>
    <source>
        <strain>ATCC 208353 / W303-1A</strain>
    </source>
</reference>
<reference key="4">
    <citation type="journal article" date="1997" name="Genetics">
        <title>Large scale identification of genes involved in cell surface biosynthesis and architecture in Saccharomyces cerevisiae.</title>
        <authorList>
            <person name="Lussier M."/>
            <person name="White A.-M."/>
            <person name="Sheraton J."/>
            <person name="di Paolo T."/>
            <person name="Treadwell J."/>
            <person name="Southard S.B."/>
            <person name="Horenstein C.I."/>
            <person name="Chen-Weiner J."/>
            <person name="Ram A.F.J."/>
            <person name="Kapteyn J.C."/>
            <person name="Roemer T.W."/>
            <person name="Vo D.H."/>
            <person name="Bondoc D.C."/>
            <person name="Hall J."/>
            <person name="Zhong W.-W."/>
            <person name="Sdicu A.-M."/>
            <person name="Davies J."/>
            <person name="Klis F.M."/>
            <person name="Robbins P.W."/>
            <person name="Bussey H."/>
        </authorList>
    </citation>
    <scope>IDENTIFICATION</scope>
</reference>
<reference key="5">
    <citation type="journal article" date="2000" name="Genetics">
        <title>Zinc-regulated genes in Saccharomyces cerevisiae revealed by transposon tagging.</title>
        <authorList>
            <person name="Yuan D.S."/>
        </authorList>
    </citation>
    <scope>IDENTIFICATION</scope>
</reference>
<reference key="6">
    <citation type="journal article" date="2003" name="J. Biol. Chem.">
        <title>Topology models for 37 Saccharomyces cerevisiae membrane proteins based on C-terminal reporter fusions and predictions.</title>
        <authorList>
            <person name="Kim H."/>
            <person name="Melen K."/>
            <person name="von Heijne G."/>
        </authorList>
    </citation>
    <scope>MEMBRANE TOPOLOGY</scope>
</reference>
<reference key="7">
    <citation type="journal article" date="2006" name="Proc. Natl. Acad. Sci. U.S.A.">
        <title>A global topology map of the Saccharomyces cerevisiae membrane proteome.</title>
        <authorList>
            <person name="Kim H."/>
            <person name="Melen K."/>
            <person name="Oesterberg M."/>
            <person name="von Heijne G."/>
        </authorList>
    </citation>
    <scope>TOPOLOGY [LARGE SCALE ANALYSIS]</scope>
    <source>
        <strain>ATCC 208353 / W303-1A</strain>
    </source>
</reference>
<accession>Q06200</accession>
<accession>D6VZ78</accession>
<accession>Q2VQX1</accession>
<protein>
    <recommendedName>
        <fullName>Protein ECM7</fullName>
    </recommendedName>
    <alternativeName>
        <fullName>Extracellular mutant protein 7</fullName>
    </alternativeName>
    <alternativeName>
        <fullName>Zinc-regulated gene 15 protein</fullName>
    </alternativeName>
</protein>